<gene>
    <name evidence="8" type="primary">hydPt-1</name>
</gene>
<keyword id="KW-0134">Cell wall</keyword>
<keyword id="KW-1015">Disulfide bond</keyword>
<keyword id="KW-0964">Secreted</keyword>
<keyword id="KW-0732">Signal</keyword>
<name>HYP1_PISTI</name>
<protein>
    <recommendedName>
        <fullName evidence="8">Class I hydrophobin 1</fullName>
    </recommendedName>
</protein>
<feature type="signal peptide" evidence="2">
    <location>
        <begin position="1"/>
        <end position="18"/>
    </location>
</feature>
<feature type="chain" id="PRO_0000013504" description="Class I hydrophobin 1">
    <location>
        <begin position="19"/>
        <end position="140"/>
    </location>
</feature>
<feature type="region of interest" description="Disordered" evidence="3">
    <location>
        <begin position="22"/>
        <end position="60"/>
    </location>
</feature>
<feature type="disulfide bond" evidence="1">
    <location>
        <begin position="58"/>
        <end position="119"/>
    </location>
</feature>
<feature type="disulfide bond" evidence="1">
    <location>
        <begin position="65"/>
        <end position="113"/>
    </location>
</feature>
<feature type="disulfide bond" evidence="1">
    <location>
        <begin position="66"/>
        <end position="99"/>
    </location>
</feature>
<feature type="disulfide bond" evidence="1">
    <location>
        <begin position="120"/>
        <end position="133"/>
    </location>
</feature>
<sequence>MKFAAVVVLAAAAAAVSAETNAQRMARGLPPKAPIRRHGTPADTEKRSHPSSTGGGQCNTGPIQCCNTVATSGSQSGVDELLTLLGLSVPVGTQVGASCSPISAVGTGSGAQCSGQTVCCEQNEWNGLVNIGCMPINLNA</sequence>
<dbReference type="EMBL" id="U29605">
    <property type="protein sequence ID" value="AAC49307.1"/>
    <property type="molecule type" value="mRNA"/>
</dbReference>
<dbReference type="PIR" id="JC4607">
    <property type="entry name" value="JC4607"/>
</dbReference>
<dbReference type="SMR" id="P52748"/>
<dbReference type="GO" id="GO:0005576">
    <property type="term" value="C:extracellular region"/>
    <property type="evidence" value="ECO:0007669"/>
    <property type="project" value="UniProtKB-KW"/>
</dbReference>
<dbReference type="GO" id="GO:0009277">
    <property type="term" value="C:fungal-type cell wall"/>
    <property type="evidence" value="ECO:0007669"/>
    <property type="project" value="InterPro"/>
</dbReference>
<dbReference type="GO" id="GO:0005199">
    <property type="term" value="F:structural constituent of cell wall"/>
    <property type="evidence" value="ECO:0007669"/>
    <property type="project" value="InterPro"/>
</dbReference>
<dbReference type="CDD" id="cd23507">
    <property type="entry name" value="hydrophobin_I"/>
    <property type="match status" value="1"/>
</dbReference>
<dbReference type="InterPro" id="IPR001338">
    <property type="entry name" value="Hydrophobin"/>
</dbReference>
<dbReference type="InterPro" id="IPR019778">
    <property type="entry name" value="Hydrophobin_CS"/>
</dbReference>
<dbReference type="Pfam" id="PF01185">
    <property type="entry name" value="Hydrophobin"/>
    <property type="match status" value="1"/>
</dbReference>
<dbReference type="SMART" id="SM00075">
    <property type="entry name" value="HYDRO"/>
    <property type="match status" value="1"/>
</dbReference>
<dbReference type="PROSITE" id="PS00956">
    <property type="entry name" value="HYDROPHOBIN"/>
    <property type="match status" value="1"/>
</dbReference>
<proteinExistence type="evidence at transcript level"/>
<accession>P52748</accession>
<evidence type="ECO:0000250" key="1">
    <source>
        <dbReference type="UniProtKB" id="Q04571"/>
    </source>
</evidence>
<evidence type="ECO:0000255" key="2"/>
<evidence type="ECO:0000256" key="3">
    <source>
        <dbReference type="SAM" id="MobiDB-lite"/>
    </source>
</evidence>
<evidence type="ECO:0000269" key="4">
    <source>
    </source>
</evidence>
<evidence type="ECO:0000269" key="5">
    <source>
    </source>
</evidence>
<evidence type="ECO:0000269" key="6">
    <source>
    </source>
</evidence>
<evidence type="ECO:0000269" key="7">
    <source>
    </source>
</evidence>
<evidence type="ECO:0000303" key="8">
    <source>
    </source>
</evidence>
<evidence type="ECO:0000305" key="9"/>
<organism>
    <name type="scientific">Pisolithus tinctorius</name>
    <name type="common">Dead man's foot</name>
    <name type="synonym">Scleroderma tinctorium</name>
    <dbReference type="NCBI Taxonomy" id="37468"/>
    <lineage>
        <taxon>Eukaryota</taxon>
        <taxon>Fungi</taxon>
        <taxon>Dikarya</taxon>
        <taxon>Basidiomycota</taxon>
        <taxon>Agaricomycotina</taxon>
        <taxon>Agaricomycetes</taxon>
        <taxon>Agaricomycetidae</taxon>
        <taxon>Boletales</taxon>
        <taxon>Sclerodermatineae</taxon>
        <taxon>Pisolithaceae</taxon>
        <taxon>Pisolithus</taxon>
    </lineage>
</organism>
<reference key="1">
    <citation type="journal article" date="1996" name="Gene">
        <title>Cloning and characterization of hydrophobins-encoding cDNAs from the ectomycorrhizal basdiomycete Pisolithus tinctorius.</title>
        <authorList>
            <person name="Tagu D."/>
            <person name="Nasse B."/>
            <person name="Martin F."/>
        </authorList>
    </citation>
    <scope>NUCLEOTIDE SEQUENCE [MRNA]</scope>
    <scope>DEVELOPMENTAL STAGE</scope>
    <source>
        <strain>441</strain>
    </source>
</reference>
<reference key="2">
    <citation type="journal article" date="2001" name="Curr. Genet.">
        <title>Cloning and expression analysis of a new hydrophobin cDNA from the ectomycorrhizal basidiomycete Pisolithus.</title>
        <authorList>
            <person name="Duplessis S."/>
            <person name="Sorin C."/>
            <person name="Voiblet C."/>
            <person name="Palin B."/>
            <person name="Martin F."/>
            <person name="Tagu D."/>
        </authorList>
    </citation>
    <scope>INDUCTION</scope>
</reference>
<reference key="3">
    <citation type="journal article" date="2001" name="New Phytol.">
        <title>Immunolocalization of hydrophobin HYDPt-1 from the ectomycorrhizal basidiomycete Pisolithus tinctorius during colonization of Eucalyptus globulus roots.</title>
        <authorList>
            <person name="Tagu D."/>
            <person name="De Bellis R."/>
            <person name="Balestrini R."/>
            <person name="De Vries O.M.H."/>
            <person name="Piccoli G."/>
            <person name="Stocchi V."/>
            <person name="Bonfante P."/>
            <person name="Martin F."/>
        </authorList>
    </citation>
    <scope>SUBCELLULAR LOCATION</scope>
</reference>
<reference key="4">
    <citation type="journal article" date="2002" name="Eur. J. Histochem.">
        <title>Hydrophobins in ectomycorrhizas: heterologous transcription of the Pisolithus HydPt-1 gene in yeast and Hebeloma cylindrosporum.</title>
        <authorList>
            <person name="Tagu D."/>
            <person name="Marmeisse R."/>
            <person name="Baillet Y."/>
            <person name="Riviere S."/>
            <person name="Palin B."/>
            <person name="Bernardini F."/>
            <person name="Mereau A."/>
            <person name="Gay G."/>
            <person name="Balestrini R."/>
            <person name="Bonfante P."/>
            <person name="Martin F."/>
        </authorList>
    </citation>
    <scope>INDUCTION</scope>
</reference>
<comment type="function">
    <text evidence="9">Aerial growth, conidiation, and dispersal of filamentous fungi in the environment rely upon a capability of their secreting small amphipathic proteins called hydrophobins (HPBs) with low sequence identity. Class I can self-assemble into an outermost layer of rodlet bundles on aerial cell surfaces, conferring cellular hydrophobicity that supports fungal growth, development and dispersal; whereas Class II form highly ordered films at water-air interfaces through intermolecular interactions but contribute nothing to the rodlet structure.</text>
</comment>
<comment type="subunit">
    <text evidence="1">Self-assembles to form functional amyloid fibrils called rodlets. Self-assembly into fibrillar rodlets occurs spontaneously at hydrophobic:hydrophilic interfaces and the rodlets further associate laterally to form amphipathic monolayers.</text>
</comment>
<comment type="subcellular location">
    <subcellularLocation>
        <location evidence="6">Secreted</location>
    </subcellularLocation>
    <subcellularLocation>
        <location evidence="6">Secreted</location>
        <location evidence="6">Cell wall</location>
    </subcellularLocation>
    <text evidence="6">Localizes at the surface of the hyphae with no preferential accumulation in the fungal cells of the different tissues of the ectomycorrhiza.</text>
</comment>
<comment type="developmental stage">
    <text evidence="7">Not expressed in mycelia grown in liquid culture but accumulates highly in aerial hyphae (PubMed:8626073). Also highly expressed in abundant in Eucalyptus globulus-Pt ectomycorrhiza in early stages of differentiation, during the colonization of roots (PubMed:8626073).</text>
</comment>
<comment type="induction">
    <text evidence="4 5">Expression is not regulated by ammonium and glucose concentrations (PubMed:11525407). The introns present in the gene are required for the proper heterologous expression in the ectomycorrhizal basidiomycete Hebeloma cylindrosporum (PubMed:12044044).</text>
</comment>
<comment type="similarity">
    <text evidence="9">Belongs to the fungal hydrophobin family.</text>
</comment>